<reference key="1">
    <citation type="journal article" date="2008" name="Genomics">
        <title>Characterization of ST-4821 complex, a unique Neisseria meningitidis clone.</title>
        <authorList>
            <person name="Peng J."/>
            <person name="Yang L."/>
            <person name="Yang F."/>
            <person name="Yang J."/>
            <person name="Yan Y."/>
            <person name="Nie H."/>
            <person name="Zhang X."/>
            <person name="Xiong Z."/>
            <person name="Jiang Y."/>
            <person name="Cheng F."/>
            <person name="Xu X."/>
            <person name="Chen S."/>
            <person name="Sun L."/>
            <person name="Li W."/>
            <person name="Shen Y."/>
            <person name="Shao Z."/>
            <person name="Liang X."/>
            <person name="Xu J."/>
            <person name="Jin Q."/>
        </authorList>
    </citation>
    <scope>NUCLEOTIDE SEQUENCE [LARGE SCALE GENOMIC DNA]</scope>
    <source>
        <strain>053442</strain>
    </source>
</reference>
<feature type="chain" id="PRO_1000083210" description="Glycine dehydrogenase (decarboxylating)">
    <location>
        <begin position="1"/>
        <end position="950"/>
    </location>
</feature>
<feature type="modified residue" description="N6-(pyridoxal phosphate)lysine" evidence="1">
    <location>
        <position position="698"/>
    </location>
</feature>
<comment type="function">
    <text evidence="1">The glycine cleavage system catalyzes the degradation of glycine. The P protein binds the alpha-amino group of glycine through its pyridoxal phosphate cofactor; CO(2) is released and the remaining methylamine moiety is then transferred to the lipoamide cofactor of the H protein.</text>
</comment>
<comment type="catalytic activity">
    <reaction evidence="1">
        <text>N(6)-[(R)-lipoyl]-L-lysyl-[glycine-cleavage complex H protein] + glycine + H(+) = N(6)-[(R)-S(8)-aminomethyldihydrolipoyl]-L-lysyl-[glycine-cleavage complex H protein] + CO2</text>
        <dbReference type="Rhea" id="RHEA:24304"/>
        <dbReference type="Rhea" id="RHEA-COMP:10494"/>
        <dbReference type="Rhea" id="RHEA-COMP:10495"/>
        <dbReference type="ChEBI" id="CHEBI:15378"/>
        <dbReference type="ChEBI" id="CHEBI:16526"/>
        <dbReference type="ChEBI" id="CHEBI:57305"/>
        <dbReference type="ChEBI" id="CHEBI:83099"/>
        <dbReference type="ChEBI" id="CHEBI:83143"/>
        <dbReference type="EC" id="1.4.4.2"/>
    </reaction>
</comment>
<comment type="cofactor">
    <cofactor evidence="1">
        <name>pyridoxal 5'-phosphate</name>
        <dbReference type="ChEBI" id="CHEBI:597326"/>
    </cofactor>
</comment>
<comment type="subunit">
    <text evidence="1">The glycine cleavage system is composed of four proteins: P, T, L and H.</text>
</comment>
<comment type="similarity">
    <text evidence="1">Belongs to the GcvP family.</text>
</comment>
<proteinExistence type="inferred from homology"/>
<keyword id="KW-0560">Oxidoreductase</keyword>
<keyword id="KW-0663">Pyridoxal phosphate</keyword>
<name>GCSP_NEIM0</name>
<gene>
    <name evidence="1" type="primary">gcvP</name>
    <name type="ordered locus">NMCC_1587</name>
</gene>
<dbReference type="EC" id="1.4.4.2" evidence="1"/>
<dbReference type="EMBL" id="CP000381">
    <property type="protein sequence ID" value="ABX73736.1"/>
    <property type="molecule type" value="Genomic_DNA"/>
</dbReference>
<dbReference type="RefSeq" id="WP_002258673.1">
    <property type="nucleotide sequence ID" value="NC_010120.1"/>
</dbReference>
<dbReference type="SMR" id="A9M1P7"/>
<dbReference type="KEGG" id="nmn:NMCC_1587"/>
<dbReference type="HOGENOM" id="CLU_004620_3_2_4"/>
<dbReference type="Proteomes" id="UP000001177">
    <property type="component" value="Chromosome"/>
</dbReference>
<dbReference type="GO" id="GO:0005829">
    <property type="term" value="C:cytosol"/>
    <property type="evidence" value="ECO:0007669"/>
    <property type="project" value="TreeGrafter"/>
</dbReference>
<dbReference type="GO" id="GO:0005960">
    <property type="term" value="C:glycine cleavage complex"/>
    <property type="evidence" value="ECO:0007669"/>
    <property type="project" value="TreeGrafter"/>
</dbReference>
<dbReference type="GO" id="GO:0016594">
    <property type="term" value="F:glycine binding"/>
    <property type="evidence" value="ECO:0007669"/>
    <property type="project" value="TreeGrafter"/>
</dbReference>
<dbReference type="GO" id="GO:0004375">
    <property type="term" value="F:glycine dehydrogenase (decarboxylating) activity"/>
    <property type="evidence" value="ECO:0007669"/>
    <property type="project" value="UniProtKB-EC"/>
</dbReference>
<dbReference type="GO" id="GO:0030170">
    <property type="term" value="F:pyridoxal phosphate binding"/>
    <property type="evidence" value="ECO:0007669"/>
    <property type="project" value="TreeGrafter"/>
</dbReference>
<dbReference type="GO" id="GO:0019464">
    <property type="term" value="P:glycine decarboxylation via glycine cleavage system"/>
    <property type="evidence" value="ECO:0007669"/>
    <property type="project" value="UniProtKB-UniRule"/>
</dbReference>
<dbReference type="FunFam" id="3.40.640.10:FF:000005">
    <property type="entry name" value="Glycine dehydrogenase (decarboxylating), mitochondrial"/>
    <property type="match status" value="1"/>
</dbReference>
<dbReference type="FunFam" id="3.90.1150.10:FF:000007">
    <property type="entry name" value="Glycine dehydrogenase (decarboxylating), mitochondrial"/>
    <property type="match status" value="1"/>
</dbReference>
<dbReference type="FunFam" id="3.40.640.10:FF:000007">
    <property type="entry name" value="glycine dehydrogenase (Decarboxylating), mitochondrial"/>
    <property type="match status" value="1"/>
</dbReference>
<dbReference type="Gene3D" id="3.90.1150.10">
    <property type="entry name" value="Aspartate Aminotransferase, domain 1"/>
    <property type="match status" value="2"/>
</dbReference>
<dbReference type="Gene3D" id="3.40.640.10">
    <property type="entry name" value="Type I PLP-dependent aspartate aminotransferase-like (Major domain)"/>
    <property type="match status" value="2"/>
</dbReference>
<dbReference type="HAMAP" id="MF_00711">
    <property type="entry name" value="GcvP"/>
    <property type="match status" value="1"/>
</dbReference>
<dbReference type="InterPro" id="IPR003437">
    <property type="entry name" value="GcvP"/>
</dbReference>
<dbReference type="InterPro" id="IPR049316">
    <property type="entry name" value="GDC-P_C"/>
</dbReference>
<dbReference type="InterPro" id="IPR049315">
    <property type="entry name" value="GDC-P_N"/>
</dbReference>
<dbReference type="InterPro" id="IPR020581">
    <property type="entry name" value="GDC_P"/>
</dbReference>
<dbReference type="InterPro" id="IPR015424">
    <property type="entry name" value="PyrdxlP-dep_Trfase"/>
</dbReference>
<dbReference type="InterPro" id="IPR015421">
    <property type="entry name" value="PyrdxlP-dep_Trfase_major"/>
</dbReference>
<dbReference type="InterPro" id="IPR015422">
    <property type="entry name" value="PyrdxlP-dep_Trfase_small"/>
</dbReference>
<dbReference type="NCBIfam" id="TIGR00461">
    <property type="entry name" value="gcvP"/>
    <property type="match status" value="1"/>
</dbReference>
<dbReference type="NCBIfam" id="NF003346">
    <property type="entry name" value="PRK04366.1"/>
    <property type="match status" value="1"/>
</dbReference>
<dbReference type="PANTHER" id="PTHR11773:SF13">
    <property type="entry name" value="GLYCINE DEHYDROGENASE (DECARBOXYLATING)"/>
    <property type="match status" value="1"/>
</dbReference>
<dbReference type="PANTHER" id="PTHR11773">
    <property type="entry name" value="GLYCINE DEHYDROGENASE, DECARBOXYLATING"/>
    <property type="match status" value="1"/>
</dbReference>
<dbReference type="Pfam" id="PF21478">
    <property type="entry name" value="GcvP2_C"/>
    <property type="match status" value="1"/>
</dbReference>
<dbReference type="Pfam" id="PF02347">
    <property type="entry name" value="GDC-P"/>
    <property type="match status" value="2"/>
</dbReference>
<dbReference type="SUPFAM" id="SSF53383">
    <property type="entry name" value="PLP-dependent transferases"/>
    <property type="match status" value="2"/>
</dbReference>
<accession>A9M1P7</accession>
<protein>
    <recommendedName>
        <fullName evidence="1">Glycine dehydrogenase (decarboxylating)</fullName>
        <ecNumber evidence="1">1.4.4.2</ecNumber>
    </recommendedName>
    <alternativeName>
        <fullName evidence="1">Glycine cleavage system P-protein</fullName>
    </alternativeName>
    <alternativeName>
        <fullName evidence="1">Glycine decarboxylase</fullName>
    </alternativeName>
    <alternativeName>
        <fullName evidence="1">Glycine dehydrogenase (aminomethyl-transferring)</fullName>
    </alternativeName>
</protein>
<evidence type="ECO:0000255" key="1">
    <source>
        <dbReference type="HAMAP-Rule" id="MF_00711"/>
    </source>
</evidence>
<organism>
    <name type="scientific">Neisseria meningitidis serogroup C (strain 053442)</name>
    <dbReference type="NCBI Taxonomy" id="374833"/>
    <lineage>
        <taxon>Bacteria</taxon>
        <taxon>Pseudomonadati</taxon>
        <taxon>Pseudomonadota</taxon>
        <taxon>Betaproteobacteria</taxon>
        <taxon>Neisseriales</taxon>
        <taxon>Neisseriaceae</taxon>
        <taxon>Neisseria</taxon>
    </lineage>
</organism>
<sequence length="950" mass="103931">MKLSELFNPDEFAARHLSFGDEAALLAAVGEKSMDDFVGNTVPQSIRMPSELDLPEALTEADALAKLKGIASKNMINKSYIGLGYYPTRVPNVILRNVLENPGWYTAYTPYQAEIAQGRLEALLNFQQVCIDLTGFPVAGASLLDEATAAAEAMAMAHRVGKVKSERFFVDARVYPQTLDVMKTRAKYFGFELVVGDFAQADEGEYFGALFQYVGKDGDVQDLQDVIGRLKAKGTIVAVSADIMSLVLLKSPAELGADIALGNTQRFGVPMGFGGPHAAYFAFKDEFKRSAPGRIIGVSKDASGKPALRMALSTREQHIRREKATSNICTAQALLANLAGMYAVYHGPEGVKRIANRIHALASAFADALVSDGINVVHKVFFDTVTVDFGNKEKADQVFAAALESGYNLRRVNDTQVAAAFHETSACEDLVDLYRAFTGKDTFAFADDVKGRLNAELLRQDDILQHPVFNRYHTEHEMLRYLKKLEDRDLAMNRSMISLGSCTMKLNATAEMLPITWAEFSDIHPYAPEAQTAGYRELLADMENSLKSITGFDAISFQPNSGAQGEYSGMLAIRRYQEAQGEAQRNICLIPKSAHGTNPATAAMLGLKVVVVDTDEHGNVNIDDLKAKAEQHRDALSAIMITYPSTHGVYEEGIRDICRIVHENGGQVYMDGANLNAQIGIMQPAEVGADVLHMNLHKTFCIPHGGGGPGMGPIGLKAHLAPFAPGHALTDTHSASADQTAVAAAAFGSASILPITWMYLTMMGKQGMEQATRWALLNANYVAKRLSEDYPILYTGKNGRVAHECIVDLRPLKAESGITETDIAKRLMDYGFHAPTVSFPVAGTLMIEPTESESKAELDRFIAALKQIKQEVLKVGRGEWPKEDNPLVNAPHTASDVTGEWAHPYSREEAVFPLPFVREHKFWPSVNRVDDVYGDRNLVCSCPPMENYED</sequence>